<organism>
    <name type="scientific">Brucella melitensis biotype 1 (strain ATCC 23456 / CCUG 17765 / NCTC 10094 / 16M)</name>
    <dbReference type="NCBI Taxonomy" id="224914"/>
    <lineage>
        <taxon>Bacteria</taxon>
        <taxon>Pseudomonadati</taxon>
        <taxon>Pseudomonadota</taxon>
        <taxon>Alphaproteobacteria</taxon>
        <taxon>Hyphomicrobiales</taxon>
        <taxon>Brucellaceae</taxon>
        <taxon>Brucella/Ochrobactrum group</taxon>
        <taxon>Brucella</taxon>
    </lineage>
</organism>
<comment type="function">
    <text evidence="1">Catalyzes the ATP-dependent amidation of the two carboxylate groups at positions a and c of hydrogenobyrinate, using either L-glutamine or ammonia as the nitrogen source.</text>
</comment>
<comment type="catalytic activity">
    <reaction evidence="1">
        <text>hydrogenobyrinate + 2 L-glutamine + 2 ATP + 2 H2O = hydrogenobyrinate a,c-diamide + 2 L-glutamate + 2 ADP + 2 phosphate + 2 H(+)</text>
        <dbReference type="Rhea" id="RHEA:12544"/>
        <dbReference type="ChEBI" id="CHEBI:15377"/>
        <dbReference type="ChEBI" id="CHEBI:15378"/>
        <dbReference type="ChEBI" id="CHEBI:29985"/>
        <dbReference type="ChEBI" id="CHEBI:30616"/>
        <dbReference type="ChEBI" id="CHEBI:43474"/>
        <dbReference type="ChEBI" id="CHEBI:58359"/>
        <dbReference type="ChEBI" id="CHEBI:77873"/>
        <dbReference type="ChEBI" id="CHEBI:77874"/>
        <dbReference type="ChEBI" id="CHEBI:456216"/>
        <dbReference type="EC" id="6.3.5.9"/>
    </reaction>
</comment>
<comment type="cofactor">
    <cofactor evidence="1">
        <name>Mg(2+)</name>
        <dbReference type="ChEBI" id="CHEBI:18420"/>
    </cofactor>
</comment>
<comment type="pathway">
    <text evidence="1">Cofactor biosynthesis; adenosylcobalamin biosynthesis; cob(II)yrinate a,c-diamide from precorrin-2 (aerobic route): step 9/10.</text>
</comment>
<comment type="domain">
    <text evidence="1">Comprises of two domains. The C-terminal domain contains the binding site for glutamine and catalyzes the hydrolysis of this substrate to glutamate and ammonia. The N-terminal domain is anticipated to bind ATP and hydrogenobyrinate and catalyzes the ultimate synthesis of the diamide product. The ammonia produced via the glutaminase domain is probably translocated to the adjacent domain via a molecular tunnel, where it reacts with an activated intermediate.</text>
</comment>
<comment type="miscellaneous">
    <text evidence="1">The a and c carboxylates of hydrogenobyrinate are activated for nucleophilic attack via formation of a phosphorylated intermediate by ATP. CobB catalyzes first the amidation of the c-carboxylate, and then that of the a-carboxylate.</text>
</comment>
<comment type="similarity">
    <text evidence="1">Belongs to the CobB/CbiA family.</text>
</comment>
<feature type="chain" id="PRO_0000141255" description="Hydrogenobyrinate a,c-diamide synthase">
    <location>
        <begin position="1"/>
        <end position="436"/>
    </location>
</feature>
<feature type="domain" description="GATase cobBQ-type" evidence="1">
    <location>
        <begin position="244"/>
        <end position="435"/>
    </location>
</feature>
<feature type="active site" description="Nucleophile" evidence="1">
    <location>
        <position position="327"/>
    </location>
</feature>
<feature type="site" description="Increases nucleophilicity of active site Cys" evidence="1">
    <location>
        <position position="427"/>
    </location>
</feature>
<gene>
    <name evidence="1" type="primary">cobB</name>
    <name type="ordered locus">BMEI0705</name>
</gene>
<accession>Q8YHU1</accession>
<name>COBB_BRUME</name>
<dbReference type="EC" id="6.3.5.9" evidence="1"/>
<dbReference type="EMBL" id="AE008917">
    <property type="protein sequence ID" value="AAL51886.1"/>
    <property type="molecule type" value="Genomic_DNA"/>
</dbReference>
<dbReference type="PIR" id="AC3340">
    <property type="entry name" value="AC3340"/>
</dbReference>
<dbReference type="RefSeq" id="WP_002964414.1">
    <property type="nucleotide sequence ID" value="NZ_GG703780.1"/>
</dbReference>
<dbReference type="SMR" id="Q8YHU1"/>
<dbReference type="KEGG" id="bme:BMEI0705"/>
<dbReference type="KEGG" id="bmel:DK63_722"/>
<dbReference type="PATRIC" id="fig|224914.52.peg.755"/>
<dbReference type="eggNOG" id="COG1797">
    <property type="taxonomic scope" value="Bacteria"/>
</dbReference>
<dbReference type="PhylomeDB" id="Q8YHU1"/>
<dbReference type="UniPathway" id="UPA00148">
    <property type="reaction ID" value="UER00220"/>
</dbReference>
<dbReference type="Proteomes" id="UP000000419">
    <property type="component" value="Chromosome I"/>
</dbReference>
<dbReference type="GO" id="GO:0005524">
    <property type="term" value="F:ATP binding"/>
    <property type="evidence" value="ECO:0007669"/>
    <property type="project" value="UniProtKB-UniRule"/>
</dbReference>
<dbReference type="GO" id="GO:0042242">
    <property type="term" value="F:cobyrinic acid a,c-diamide synthase activity"/>
    <property type="evidence" value="ECO:0007669"/>
    <property type="project" value="InterPro"/>
</dbReference>
<dbReference type="GO" id="GO:0043802">
    <property type="term" value="F:hydrogenobyrinic acid a,c-diamide synthase (glutamine-hydrolysing) activity"/>
    <property type="evidence" value="ECO:0007669"/>
    <property type="project" value="UniProtKB-UniRule"/>
</dbReference>
<dbReference type="GO" id="GO:0009236">
    <property type="term" value="P:cobalamin biosynthetic process"/>
    <property type="evidence" value="ECO:0007669"/>
    <property type="project" value="UniProtKB-UniRule"/>
</dbReference>
<dbReference type="Gene3D" id="3.40.50.880">
    <property type="match status" value="1"/>
</dbReference>
<dbReference type="Gene3D" id="3.40.50.300">
    <property type="entry name" value="P-loop containing nucleotide triphosphate hydrolases"/>
    <property type="match status" value="1"/>
</dbReference>
<dbReference type="HAMAP" id="MF_00027">
    <property type="entry name" value="CobB_CbiA"/>
    <property type="match status" value="1"/>
</dbReference>
<dbReference type="InterPro" id="IPR004484">
    <property type="entry name" value="CbiA/CobB_synth"/>
</dbReference>
<dbReference type="InterPro" id="IPR029062">
    <property type="entry name" value="Class_I_gatase-like"/>
</dbReference>
<dbReference type="InterPro" id="IPR002586">
    <property type="entry name" value="CobQ/CobB/MinD/ParA_Nub-bd_dom"/>
</dbReference>
<dbReference type="InterPro" id="IPR011698">
    <property type="entry name" value="GATase_3"/>
</dbReference>
<dbReference type="InterPro" id="IPR027417">
    <property type="entry name" value="P-loop_NTPase"/>
</dbReference>
<dbReference type="NCBIfam" id="TIGR00379">
    <property type="entry name" value="cobB"/>
    <property type="match status" value="1"/>
</dbReference>
<dbReference type="NCBIfam" id="NF002204">
    <property type="entry name" value="PRK01077.1"/>
    <property type="match status" value="1"/>
</dbReference>
<dbReference type="PANTHER" id="PTHR43873">
    <property type="entry name" value="COBYRINATE A,C-DIAMIDE SYNTHASE"/>
    <property type="match status" value="1"/>
</dbReference>
<dbReference type="PANTHER" id="PTHR43873:SF1">
    <property type="entry name" value="COBYRINATE A,C-DIAMIDE SYNTHASE"/>
    <property type="match status" value="1"/>
</dbReference>
<dbReference type="Pfam" id="PF01656">
    <property type="entry name" value="CbiA"/>
    <property type="match status" value="1"/>
</dbReference>
<dbReference type="Pfam" id="PF07685">
    <property type="entry name" value="GATase_3"/>
    <property type="match status" value="1"/>
</dbReference>
<dbReference type="SUPFAM" id="SSF52317">
    <property type="entry name" value="Class I glutamine amidotransferase-like"/>
    <property type="match status" value="1"/>
</dbReference>
<dbReference type="SUPFAM" id="SSF52540">
    <property type="entry name" value="P-loop containing nucleoside triphosphate hydrolases"/>
    <property type="match status" value="1"/>
</dbReference>
<dbReference type="PROSITE" id="PS51274">
    <property type="entry name" value="GATASE_COBBQ"/>
    <property type="match status" value="1"/>
</dbReference>
<keyword id="KW-0067">ATP-binding</keyword>
<keyword id="KW-0169">Cobalamin biosynthesis</keyword>
<keyword id="KW-0315">Glutamine amidotransferase</keyword>
<keyword id="KW-0436">Ligase</keyword>
<keyword id="KW-0460">Magnesium</keyword>
<keyword id="KW-0547">Nucleotide-binding</keyword>
<protein>
    <recommendedName>
        <fullName evidence="1">Hydrogenobyrinate a,c-diamide synthase</fullName>
        <ecNumber evidence="1">6.3.5.9</ecNumber>
    </recommendedName>
    <alternativeName>
        <fullName evidence="1">Hydrogenobyrinic acid a,c-diamide synthase</fullName>
    </alternativeName>
</protein>
<proteinExistence type="inferred from homology"/>
<reference key="1">
    <citation type="journal article" date="2002" name="Proc. Natl. Acad. Sci. U.S.A.">
        <title>The genome sequence of the facultative intracellular pathogen Brucella melitensis.</title>
        <authorList>
            <person name="DelVecchio V.G."/>
            <person name="Kapatral V."/>
            <person name="Redkar R.J."/>
            <person name="Patra G."/>
            <person name="Mujer C."/>
            <person name="Los T."/>
            <person name="Ivanova N."/>
            <person name="Anderson I."/>
            <person name="Bhattacharyya A."/>
            <person name="Lykidis A."/>
            <person name="Reznik G."/>
            <person name="Jablonski L."/>
            <person name="Larsen N."/>
            <person name="D'Souza M."/>
            <person name="Bernal A."/>
            <person name="Mazur M."/>
            <person name="Goltsman E."/>
            <person name="Selkov E."/>
            <person name="Elzer P.H."/>
            <person name="Hagius S."/>
            <person name="O'Callaghan D."/>
            <person name="Letesson J.-J."/>
            <person name="Haselkorn R."/>
            <person name="Kyrpides N.C."/>
            <person name="Overbeek R."/>
        </authorList>
    </citation>
    <scope>NUCLEOTIDE SEQUENCE [LARGE SCALE GENOMIC DNA]</scope>
    <source>
        <strain>ATCC 23456 / CCUG 17765 / NCTC 10094 / 16M</strain>
    </source>
</reference>
<evidence type="ECO:0000255" key="1">
    <source>
        <dbReference type="HAMAP-Rule" id="MF_00027"/>
    </source>
</evidence>
<sequence>MKGFMIAAPASGSGKTTVTLGLLRALKRRGEVLAPVKAGPDYIDPAYHRAASGVDCFNLDPWAMRPELISALSSRMTESGARVLVAEGMMGLFDGAIDGKGSSADLARLLDLPVVLVVDCARQSHSIAALVWGFSQFRKDVLIEGVILNRVGSPRHEAMLRGALAPLGVPVLGALPRDPALSLPERHLGLVQADEHAGLESFLEQAADVMEAHIDMDALQTIWLRPKRYDAMANVARLKPLGNRIAVARDDAFAFAYMHLFEGWRRRGAEISFFSPLADEAPKADADAIYLPGGYPELHAQRLAGASRFRTAIGDAAARGVTVYGECGGYMVLGKTLEDAAGVHHPMLGLLPLETSFARRKLHLGYRLLEPLGGLPWDMPLKAHEFHYASIVREEKADRLFRVRDASGENLGEAGLRVGSVSGSFMHVIDFSGEAA</sequence>